<sequence length="541" mass="60614">MGCIKSKENKSPAIKYTPENPTEPVNTSAGHYGVEHATAATTSSTKGASANFNSLSMTPFGGSSGVTPFGGASSSFSVVPSSYPTSLTGGVTIFVALYDYEARTTEDLSFKKGERFQIINNTEGDWWEARSIATGKNGYIPSNYVAPADSIQAEEWYFGKMGRKDAERLLLNPGNQRGIFLVRESETTKGAYSLSIRDWDEVRGDNVKHYKIRKLDNGGYYITTRAQFDTLQKLVKHYTEHADGLCHKLTTVCPTVKPQTQGLAKDAWEIPRESLRLEVKLGQGCFGEVWMGTWNGTTKVAIKTLKPGTMMPEAFLQEAQIMKKLRHDKLVPLYAVVSEEPIYIVTEFMSKGILLDFLKEGDGKYLKLPQLVDMAAQIADGMAYIERMNYIHRDLRAANILVGENLVCKIADFGLARLIEDNEYTARQGAKFPIKWTAPEAALYGRFTIKSDVWSFGILQTELVTKGRVPYPGMVNREVLEQVERGYRMPCPQGCPESLHELMNLCWKKDPDERPTFEYIQSFLEDYFTATEPQYQPGENL</sequence>
<feature type="initiator methionine" description="Removed" evidence="5">
    <location>
        <position position="1"/>
    </location>
</feature>
<feature type="chain" id="PRO_0000413800" description="Tyrosine-protein kinase Yes">
    <location>
        <begin position="2"/>
        <end position="541"/>
    </location>
</feature>
<feature type="domain" description="SH3" evidence="8">
    <location>
        <begin position="89"/>
        <end position="150"/>
    </location>
</feature>
<feature type="domain" description="SH2" evidence="7">
    <location>
        <begin position="156"/>
        <end position="253"/>
    </location>
</feature>
<feature type="domain" description="Protein kinase" evidence="6">
    <location>
        <begin position="275"/>
        <end position="528"/>
    </location>
</feature>
<feature type="region of interest" description="Disordered" evidence="10">
    <location>
        <begin position="1"/>
        <end position="29"/>
    </location>
</feature>
<feature type="compositionally biased region" description="Basic and acidic residues" evidence="10">
    <location>
        <begin position="1"/>
        <end position="10"/>
    </location>
</feature>
<feature type="compositionally biased region" description="Polar residues" evidence="10">
    <location>
        <begin position="19"/>
        <end position="29"/>
    </location>
</feature>
<feature type="active site" description="Proton acceptor" evidence="6 9">
    <location>
        <position position="394"/>
    </location>
</feature>
<feature type="binding site" evidence="6">
    <location>
        <begin position="281"/>
        <end position="289"/>
    </location>
    <ligand>
        <name>ATP</name>
        <dbReference type="ChEBI" id="CHEBI:30616"/>
    </ligand>
</feature>
<feature type="binding site" evidence="6">
    <location>
        <position position="303"/>
    </location>
    <ligand>
        <name>ATP</name>
        <dbReference type="ChEBI" id="CHEBI:30616"/>
    </ligand>
</feature>
<feature type="modified residue" description="Phosphotyrosine" evidence="3">
    <location>
        <position position="32"/>
    </location>
</feature>
<feature type="modified residue" description="Phosphotyrosine" evidence="2">
    <location>
        <position position="334"/>
    </location>
</feature>
<feature type="modified residue" description="Phosphotyrosine" evidence="2">
    <location>
        <position position="343"/>
    </location>
</feature>
<feature type="modified residue" description="Phosphotyrosine; by autocatalysis" evidence="2">
    <location>
        <position position="424"/>
    </location>
</feature>
<feature type="modified residue" description="Phosphotyrosine" evidence="14">
    <location>
        <position position="535"/>
    </location>
</feature>
<feature type="lipid moiety-binding region" description="N-myristoyl glycine" evidence="5">
    <location>
        <position position="2"/>
    </location>
</feature>
<feature type="lipid moiety-binding region" description="S-palmitoyl cysteine; in membrane form" evidence="1">
    <location>
        <position position="3"/>
    </location>
</feature>
<evidence type="ECO:0000250" key="1"/>
<evidence type="ECO:0000250" key="2">
    <source>
        <dbReference type="UniProtKB" id="P07947"/>
    </source>
</evidence>
<evidence type="ECO:0000250" key="3">
    <source>
        <dbReference type="UniProtKB" id="Q04736"/>
    </source>
</evidence>
<evidence type="ECO:0000250" key="4">
    <source>
        <dbReference type="UniProtKB" id="Q28923"/>
    </source>
</evidence>
<evidence type="ECO:0000255" key="5"/>
<evidence type="ECO:0000255" key="6">
    <source>
        <dbReference type="PROSITE-ProRule" id="PRU00159"/>
    </source>
</evidence>
<evidence type="ECO:0000255" key="7">
    <source>
        <dbReference type="PROSITE-ProRule" id="PRU00191"/>
    </source>
</evidence>
<evidence type="ECO:0000255" key="8">
    <source>
        <dbReference type="PROSITE-ProRule" id="PRU00192"/>
    </source>
</evidence>
<evidence type="ECO:0000255" key="9">
    <source>
        <dbReference type="PROSITE-ProRule" id="PRU10028"/>
    </source>
</evidence>
<evidence type="ECO:0000256" key="10">
    <source>
        <dbReference type="SAM" id="MobiDB-lite"/>
    </source>
</evidence>
<evidence type="ECO:0000269" key="11">
    <source>
    </source>
</evidence>
<evidence type="ECO:0000269" key="12">
    <source>
    </source>
</evidence>
<evidence type="ECO:0000269" key="13">
    <source>
    </source>
</evidence>
<evidence type="ECO:0007744" key="14">
    <source>
    </source>
</evidence>
<dbReference type="EC" id="2.7.10.2"/>
<dbReference type="EMBL" id="AABR03068393">
    <property type="status" value="NOT_ANNOTATED_CDS"/>
    <property type="molecule type" value="Genomic_DNA"/>
</dbReference>
<dbReference type="EMBL" id="AABR03068636">
    <property type="status" value="NOT_ANNOTATED_CDS"/>
    <property type="molecule type" value="Genomic_DNA"/>
</dbReference>
<dbReference type="SMR" id="F1LM93"/>
<dbReference type="FunCoup" id="F1LM93">
    <property type="interactions" value="1247"/>
</dbReference>
<dbReference type="IntAct" id="F1LM93">
    <property type="interactions" value="24"/>
</dbReference>
<dbReference type="STRING" id="10116.ENSRNOP00000053093"/>
<dbReference type="iPTMnet" id="F1LM93"/>
<dbReference type="PhosphoSitePlus" id="F1LM93"/>
<dbReference type="SwissPalm" id="F1LM93"/>
<dbReference type="PaxDb" id="10116-ENSRNOP00000053093"/>
<dbReference type="AGR" id="RGD:3977"/>
<dbReference type="RGD" id="3977">
    <property type="gene designation" value="Yes1"/>
</dbReference>
<dbReference type="eggNOG" id="KOG0197">
    <property type="taxonomic scope" value="Eukaryota"/>
</dbReference>
<dbReference type="HOGENOM" id="CLU_000288_7_2_1"/>
<dbReference type="InParanoid" id="F1LM93"/>
<dbReference type="TreeFam" id="TF351634"/>
<dbReference type="Reactome" id="R-RNO-1227986">
    <property type="pathway name" value="Signaling by ERBB2"/>
</dbReference>
<dbReference type="Reactome" id="R-RNO-1433557">
    <property type="pathway name" value="Signaling by SCF-KIT"/>
</dbReference>
<dbReference type="Reactome" id="R-RNO-1433559">
    <property type="pathway name" value="Regulation of KIT signaling"/>
</dbReference>
<dbReference type="Reactome" id="R-RNO-2029481">
    <property type="pathway name" value="FCGR activation"/>
</dbReference>
<dbReference type="Reactome" id="R-RNO-210990">
    <property type="pathway name" value="PECAM1 interactions"/>
</dbReference>
<dbReference type="Reactome" id="R-RNO-389356">
    <property type="pathway name" value="Co-stimulation by CD28"/>
</dbReference>
<dbReference type="Reactome" id="R-RNO-389513">
    <property type="pathway name" value="Co-inhibition by CTLA4"/>
</dbReference>
<dbReference type="Reactome" id="R-RNO-3928662">
    <property type="pathway name" value="EPHB-mediated forward signaling"/>
</dbReference>
<dbReference type="Reactome" id="R-RNO-3928663">
    <property type="pathway name" value="EPHA-mediated growth cone collapse"/>
</dbReference>
<dbReference type="Reactome" id="R-RNO-3928665">
    <property type="pathway name" value="EPH-ephrin mediated repulsion of cells"/>
</dbReference>
<dbReference type="Reactome" id="R-RNO-912631">
    <property type="pathway name" value="Regulation of signaling by CBL"/>
</dbReference>
<dbReference type="PRO" id="PR:F1LM93"/>
<dbReference type="Proteomes" id="UP000002494">
    <property type="component" value="Chromosome 9"/>
</dbReference>
<dbReference type="Bgee" id="ENSRNOG00000037227">
    <property type="expression patterns" value="Expressed in duodenum and 18 other cell types or tissues"/>
</dbReference>
<dbReference type="ExpressionAtlas" id="F1LM93">
    <property type="expression patterns" value="baseline and differential"/>
</dbReference>
<dbReference type="GO" id="GO:0005884">
    <property type="term" value="C:actin filament"/>
    <property type="evidence" value="ECO:0000266"/>
    <property type="project" value="RGD"/>
</dbReference>
<dbReference type="GO" id="GO:0070161">
    <property type="term" value="C:anchoring junction"/>
    <property type="evidence" value="ECO:0007669"/>
    <property type="project" value="UniProtKB-SubCell"/>
</dbReference>
<dbReference type="GO" id="GO:0030054">
    <property type="term" value="C:cell junction"/>
    <property type="evidence" value="ECO:0000266"/>
    <property type="project" value="RGD"/>
</dbReference>
<dbReference type="GO" id="GO:0005813">
    <property type="term" value="C:centrosome"/>
    <property type="evidence" value="ECO:0007669"/>
    <property type="project" value="UniProtKB-SubCell"/>
</dbReference>
<dbReference type="GO" id="GO:0005737">
    <property type="term" value="C:cytoplasm"/>
    <property type="evidence" value="ECO:0000266"/>
    <property type="project" value="RGD"/>
</dbReference>
<dbReference type="GO" id="GO:0005829">
    <property type="term" value="C:cytosol"/>
    <property type="evidence" value="ECO:0007669"/>
    <property type="project" value="UniProtKB-SubCell"/>
</dbReference>
<dbReference type="GO" id="GO:0098978">
    <property type="term" value="C:glutamatergic synapse"/>
    <property type="evidence" value="ECO:0000314"/>
    <property type="project" value="SynGO"/>
</dbReference>
<dbReference type="GO" id="GO:0005794">
    <property type="term" value="C:Golgi apparatus"/>
    <property type="evidence" value="ECO:0000266"/>
    <property type="project" value="RGD"/>
</dbReference>
<dbReference type="GO" id="GO:0005886">
    <property type="term" value="C:plasma membrane"/>
    <property type="evidence" value="ECO:0000266"/>
    <property type="project" value="RGD"/>
</dbReference>
<dbReference type="GO" id="GO:0099091">
    <property type="term" value="C:postsynaptic specialization, intracellular component"/>
    <property type="evidence" value="ECO:0000314"/>
    <property type="project" value="SynGO"/>
</dbReference>
<dbReference type="GO" id="GO:0005524">
    <property type="term" value="F:ATP binding"/>
    <property type="evidence" value="ECO:0007669"/>
    <property type="project" value="UniProtKB-KW"/>
</dbReference>
<dbReference type="GO" id="GO:0019899">
    <property type="term" value="F:enzyme binding"/>
    <property type="evidence" value="ECO:0000266"/>
    <property type="project" value="RGD"/>
</dbReference>
<dbReference type="GO" id="GO:0005154">
    <property type="term" value="F:epidermal growth factor receptor binding"/>
    <property type="evidence" value="ECO:0000353"/>
    <property type="project" value="RGD"/>
</dbReference>
<dbReference type="GO" id="GO:0004715">
    <property type="term" value="F:non-membrane spanning protein tyrosine kinase activity"/>
    <property type="evidence" value="ECO:0000318"/>
    <property type="project" value="GO_Central"/>
</dbReference>
<dbReference type="GO" id="GO:0001784">
    <property type="term" value="F:phosphotyrosine residue binding"/>
    <property type="evidence" value="ECO:0000266"/>
    <property type="project" value="RGD"/>
</dbReference>
<dbReference type="GO" id="GO:0004713">
    <property type="term" value="F:protein tyrosine kinase activity"/>
    <property type="evidence" value="ECO:0000314"/>
    <property type="project" value="RGD"/>
</dbReference>
<dbReference type="GO" id="GO:0005102">
    <property type="term" value="F:signaling receptor binding"/>
    <property type="evidence" value="ECO:0000318"/>
    <property type="project" value="GO_Central"/>
</dbReference>
<dbReference type="GO" id="GO:0044325">
    <property type="term" value="F:transmembrane transporter binding"/>
    <property type="evidence" value="ECO:0000266"/>
    <property type="project" value="RGD"/>
</dbReference>
<dbReference type="GO" id="GO:0030154">
    <property type="term" value="P:cell differentiation"/>
    <property type="evidence" value="ECO:0000318"/>
    <property type="project" value="GO_Central"/>
</dbReference>
<dbReference type="GO" id="GO:0007169">
    <property type="term" value="P:cell surface receptor protein tyrosine kinase signaling pathway"/>
    <property type="evidence" value="ECO:0000318"/>
    <property type="project" value="GO_Central"/>
</dbReference>
<dbReference type="GO" id="GO:0036120">
    <property type="term" value="P:cellular response to platelet-derived growth factor stimulus"/>
    <property type="evidence" value="ECO:0000266"/>
    <property type="project" value="RGD"/>
</dbReference>
<dbReference type="GO" id="GO:0071300">
    <property type="term" value="P:cellular response to retinoic acid"/>
    <property type="evidence" value="ECO:0000266"/>
    <property type="project" value="RGD"/>
</dbReference>
<dbReference type="GO" id="GO:0071560">
    <property type="term" value="P:cellular response to transforming growth factor beta stimulus"/>
    <property type="evidence" value="ECO:0000266"/>
    <property type="project" value="RGD"/>
</dbReference>
<dbReference type="GO" id="GO:0045944">
    <property type="term" value="P:positive regulation of transcription by RNA polymerase II"/>
    <property type="evidence" value="ECO:0000266"/>
    <property type="project" value="RGD"/>
</dbReference>
<dbReference type="GO" id="GO:0010827">
    <property type="term" value="P:regulation of D-glucose transmembrane transport"/>
    <property type="evidence" value="ECO:0000266"/>
    <property type="project" value="RGD"/>
</dbReference>
<dbReference type="CDD" id="cd05069">
    <property type="entry name" value="PTKc_Yes"/>
    <property type="match status" value="1"/>
</dbReference>
<dbReference type="CDD" id="cd09933">
    <property type="entry name" value="SH2_Src_family"/>
    <property type="match status" value="1"/>
</dbReference>
<dbReference type="CDD" id="cd12007">
    <property type="entry name" value="SH3_Yes"/>
    <property type="match status" value="1"/>
</dbReference>
<dbReference type="FunFam" id="1.10.510.10:FF:000553">
    <property type="entry name" value="Tyrosine-protein kinase"/>
    <property type="match status" value="1"/>
</dbReference>
<dbReference type="FunFam" id="2.30.30.40:FF:000022">
    <property type="entry name" value="Tyrosine-protein kinase"/>
    <property type="match status" value="1"/>
</dbReference>
<dbReference type="FunFam" id="3.30.200.20:FF:000016">
    <property type="entry name" value="Tyrosine-protein kinase"/>
    <property type="match status" value="1"/>
</dbReference>
<dbReference type="FunFam" id="3.30.505.10:FF:000001">
    <property type="entry name" value="Tyrosine-protein kinase"/>
    <property type="match status" value="1"/>
</dbReference>
<dbReference type="Gene3D" id="3.30.200.20">
    <property type="entry name" value="Phosphorylase Kinase, domain 1"/>
    <property type="match status" value="1"/>
</dbReference>
<dbReference type="Gene3D" id="3.30.505.10">
    <property type="entry name" value="SH2 domain"/>
    <property type="match status" value="1"/>
</dbReference>
<dbReference type="Gene3D" id="2.30.30.40">
    <property type="entry name" value="SH3 Domains"/>
    <property type="match status" value="1"/>
</dbReference>
<dbReference type="Gene3D" id="1.10.510.10">
    <property type="entry name" value="Transferase(Phosphotransferase) domain 1"/>
    <property type="match status" value="1"/>
</dbReference>
<dbReference type="InterPro" id="IPR011009">
    <property type="entry name" value="Kinase-like_dom_sf"/>
</dbReference>
<dbReference type="InterPro" id="IPR050198">
    <property type="entry name" value="Non-receptor_tyrosine_kinases"/>
</dbReference>
<dbReference type="InterPro" id="IPR000719">
    <property type="entry name" value="Prot_kinase_dom"/>
</dbReference>
<dbReference type="InterPro" id="IPR017441">
    <property type="entry name" value="Protein_kinase_ATP_BS"/>
</dbReference>
<dbReference type="InterPro" id="IPR001245">
    <property type="entry name" value="Ser-Thr/Tyr_kinase_cat_dom"/>
</dbReference>
<dbReference type="InterPro" id="IPR000980">
    <property type="entry name" value="SH2"/>
</dbReference>
<dbReference type="InterPro" id="IPR036860">
    <property type="entry name" value="SH2_dom_sf"/>
</dbReference>
<dbReference type="InterPro" id="IPR036028">
    <property type="entry name" value="SH3-like_dom_sf"/>
</dbReference>
<dbReference type="InterPro" id="IPR001452">
    <property type="entry name" value="SH3_domain"/>
</dbReference>
<dbReference type="InterPro" id="IPR008266">
    <property type="entry name" value="Tyr_kinase_AS"/>
</dbReference>
<dbReference type="InterPro" id="IPR020635">
    <property type="entry name" value="Tyr_kinase_cat_dom"/>
</dbReference>
<dbReference type="InterPro" id="IPR035751">
    <property type="entry name" value="Yes_SH3"/>
</dbReference>
<dbReference type="PANTHER" id="PTHR24418">
    <property type="entry name" value="TYROSINE-PROTEIN KINASE"/>
    <property type="match status" value="1"/>
</dbReference>
<dbReference type="Pfam" id="PF07714">
    <property type="entry name" value="PK_Tyr_Ser-Thr"/>
    <property type="match status" value="1"/>
</dbReference>
<dbReference type="Pfam" id="PF00017">
    <property type="entry name" value="SH2"/>
    <property type="match status" value="1"/>
</dbReference>
<dbReference type="Pfam" id="PF00018">
    <property type="entry name" value="SH3_1"/>
    <property type="match status" value="1"/>
</dbReference>
<dbReference type="PRINTS" id="PR00401">
    <property type="entry name" value="SH2DOMAIN"/>
</dbReference>
<dbReference type="PRINTS" id="PR00452">
    <property type="entry name" value="SH3DOMAIN"/>
</dbReference>
<dbReference type="PRINTS" id="PR00109">
    <property type="entry name" value="TYRKINASE"/>
</dbReference>
<dbReference type="SMART" id="SM00252">
    <property type="entry name" value="SH2"/>
    <property type="match status" value="1"/>
</dbReference>
<dbReference type="SMART" id="SM00326">
    <property type="entry name" value="SH3"/>
    <property type="match status" value="1"/>
</dbReference>
<dbReference type="SMART" id="SM00219">
    <property type="entry name" value="TyrKc"/>
    <property type="match status" value="1"/>
</dbReference>
<dbReference type="SUPFAM" id="SSF56112">
    <property type="entry name" value="Protein kinase-like (PK-like)"/>
    <property type="match status" value="1"/>
</dbReference>
<dbReference type="SUPFAM" id="SSF55550">
    <property type="entry name" value="SH2 domain"/>
    <property type="match status" value="1"/>
</dbReference>
<dbReference type="SUPFAM" id="SSF50044">
    <property type="entry name" value="SH3-domain"/>
    <property type="match status" value="1"/>
</dbReference>
<dbReference type="PROSITE" id="PS00107">
    <property type="entry name" value="PROTEIN_KINASE_ATP"/>
    <property type="match status" value="1"/>
</dbReference>
<dbReference type="PROSITE" id="PS50011">
    <property type="entry name" value="PROTEIN_KINASE_DOM"/>
    <property type="match status" value="1"/>
</dbReference>
<dbReference type="PROSITE" id="PS00109">
    <property type="entry name" value="PROTEIN_KINASE_TYR"/>
    <property type="match status" value="1"/>
</dbReference>
<dbReference type="PROSITE" id="PS50001">
    <property type="entry name" value="SH2"/>
    <property type="match status" value="1"/>
</dbReference>
<dbReference type="PROSITE" id="PS50002">
    <property type="entry name" value="SH3"/>
    <property type="match status" value="1"/>
</dbReference>
<keyword id="KW-0067">ATP-binding</keyword>
<keyword id="KW-0965">Cell junction</keyword>
<keyword id="KW-1003">Cell membrane</keyword>
<keyword id="KW-0963">Cytoplasm</keyword>
<keyword id="KW-0206">Cytoskeleton</keyword>
<keyword id="KW-0418">Kinase</keyword>
<keyword id="KW-0449">Lipoprotein</keyword>
<keyword id="KW-0472">Membrane</keyword>
<keyword id="KW-0519">Myristate</keyword>
<keyword id="KW-0547">Nucleotide-binding</keyword>
<keyword id="KW-0564">Palmitate</keyword>
<keyword id="KW-0597">Phosphoprotein</keyword>
<keyword id="KW-1185">Reference proteome</keyword>
<keyword id="KW-0727">SH2 domain</keyword>
<keyword id="KW-0728">SH3 domain</keyword>
<keyword id="KW-0808">Transferase</keyword>
<keyword id="KW-0829">Tyrosine-protein kinase</keyword>
<organism>
    <name type="scientific">Rattus norvegicus</name>
    <name type="common">Rat</name>
    <dbReference type="NCBI Taxonomy" id="10116"/>
    <lineage>
        <taxon>Eukaryota</taxon>
        <taxon>Metazoa</taxon>
        <taxon>Chordata</taxon>
        <taxon>Craniata</taxon>
        <taxon>Vertebrata</taxon>
        <taxon>Euteleostomi</taxon>
        <taxon>Mammalia</taxon>
        <taxon>Eutheria</taxon>
        <taxon>Euarchontoglires</taxon>
        <taxon>Glires</taxon>
        <taxon>Rodentia</taxon>
        <taxon>Myomorpha</taxon>
        <taxon>Muroidea</taxon>
        <taxon>Muridae</taxon>
        <taxon>Murinae</taxon>
        <taxon>Rattus</taxon>
    </lineage>
</organism>
<reference key="1">
    <citation type="journal article" date="2004" name="Nature">
        <title>Genome sequence of the Brown Norway rat yields insights into mammalian evolution.</title>
        <authorList>
            <person name="Gibbs R.A."/>
            <person name="Weinstock G.M."/>
            <person name="Metzker M.L."/>
            <person name="Muzny D.M."/>
            <person name="Sodergren E.J."/>
            <person name="Scherer S."/>
            <person name="Scott G."/>
            <person name="Steffen D."/>
            <person name="Worley K.C."/>
            <person name="Burch P.E."/>
            <person name="Okwuonu G."/>
            <person name="Hines S."/>
            <person name="Lewis L."/>
            <person name="Deramo C."/>
            <person name="Delgado O."/>
            <person name="Dugan-Rocha S."/>
            <person name="Miner G."/>
            <person name="Morgan M."/>
            <person name="Hawes A."/>
            <person name="Gill R."/>
            <person name="Holt R.A."/>
            <person name="Adams M.D."/>
            <person name="Amanatides P.G."/>
            <person name="Baden-Tillson H."/>
            <person name="Barnstead M."/>
            <person name="Chin S."/>
            <person name="Evans C.A."/>
            <person name="Ferriera S."/>
            <person name="Fosler C."/>
            <person name="Glodek A."/>
            <person name="Gu Z."/>
            <person name="Jennings D."/>
            <person name="Kraft C.L."/>
            <person name="Nguyen T."/>
            <person name="Pfannkoch C.M."/>
            <person name="Sitter C."/>
            <person name="Sutton G.G."/>
            <person name="Venter J.C."/>
            <person name="Woodage T."/>
            <person name="Smith D."/>
            <person name="Lee H.-M."/>
            <person name="Gustafson E."/>
            <person name="Cahill P."/>
            <person name="Kana A."/>
            <person name="Doucette-Stamm L."/>
            <person name="Weinstock K."/>
            <person name="Fechtel K."/>
            <person name="Weiss R.B."/>
            <person name="Dunn D.M."/>
            <person name="Green E.D."/>
            <person name="Blakesley R.W."/>
            <person name="Bouffard G.G."/>
            <person name="De Jong P.J."/>
            <person name="Osoegawa K."/>
            <person name="Zhu B."/>
            <person name="Marra M."/>
            <person name="Schein J."/>
            <person name="Bosdet I."/>
            <person name="Fjell C."/>
            <person name="Jones S."/>
            <person name="Krzywinski M."/>
            <person name="Mathewson C."/>
            <person name="Siddiqui A."/>
            <person name="Wye N."/>
            <person name="McPherson J."/>
            <person name="Zhao S."/>
            <person name="Fraser C.M."/>
            <person name="Shetty J."/>
            <person name="Shatsman S."/>
            <person name="Geer K."/>
            <person name="Chen Y."/>
            <person name="Abramzon S."/>
            <person name="Nierman W.C."/>
            <person name="Havlak P.H."/>
            <person name="Chen R."/>
            <person name="Durbin K.J."/>
            <person name="Egan A."/>
            <person name="Ren Y."/>
            <person name="Song X.-Z."/>
            <person name="Li B."/>
            <person name="Liu Y."/>
            <person name="Qin X."/>
            <person name="Cawley S."/>
            <person name="Cooney A.J."/>
            <person name="D'Souza L.M."/>
            <person name="Martin K."/>
            <person name="Wu J.Q."/>
            <person name="Gonzalez-Garay M.L."/>
            <person name="Jackson A.R."/>
            <person name="Kalafus K.J."/>
            <person name="McLeod M.P."/>
            <person name="Milosavljevic A."/>
            <person name="Virk D."/>
            <person name="Volkov A."/>
            <person name="Wheeler D.A."/>
            <person name="Zhang Z."/>
            <person name="Bailey J.A."/>
            <person name="Eichler E.E."/>
            <person name="Tuzun E."/>
            <person name="Birney E."/>
            <person name="Mongin E."/>
            <person name="Ureta-Vidal A."/>
            <person name="Woodwark C."/>
            <person name="Zdobnov E."/>
            <person name="Bork P."/>
            <person name="Suyama M."/>
            <person name="Torrents D."/>
            <person name="Alexandersson M."/>
            <person name="Trask B.J."/>
            <person name="Young J.M."/>
            <person name="Huang H."/>
            <person name="Wang H."/>
            <person name="Xing H."/>
            <person name="Daniels S."/>
            <person name="Gietzen D."/>
            <person name="Schmidt J."/>
            <person name="Stevens K."/>
            <person name="Vitt U."/>
            <person name="Wingrove J."/>
            <person name="Camara F."/>
            <person name="Mar Alba M."/>
            <person name="Abril J.F."/>
            <person name="Guigo R."/>
            <person name="Smit A."/>
            <person name="Dubchak I."/>
            <person name="Rubin E.M."/>
            <person name="Couronne O."/>
            <person name="Poliakov A."/>
            <person name="Huebner N."/>
            <person name="Ganten D."/>
            <person name="Goesele C."/>
            <person name="Hummel O."/>
            <person name="Kreitler T."/>
            <person name="Lee Y.-A."/>
            <person name="Monti J."/>
            <person name="Schulz H."/>
            <person name="Zimdahl H."/>
            <person name="Himmelbauer H."/>
            <person name="Lehrach H."/>
            <person name="Jacob H.J."/>
            <person name="Bromberg S."/>
            <person name="Gullings-Handley J."/>
            <person name="Jensen-Seaman M.I."/>
            <person name="Kwitek A.E."/>
            <person name="Lazar J."/>
            <person name="Pasko D."/>
            <person name="Tonellato P.J."/>
            <person name="Twigger S."/>
            <person name="Ponting C.P."/>
            <person name="Duarte J.M."/>
            <person name="Rice S."/>
            <person name="Goodstadt L."/>
            <person name="Beatson S.A."/>
            <person name="Emes R.D."/>
            <person name="Winter E.E."/>
            <person name="Webber C."/>
            <person name="Brandt P."/>
            <person name="Nyakatura G."/>
            <person name="Adetobi M."/>
            <person name="Chiaromonte F."/>
            <person name="Elnitski L."/>
            <person name="Eswara P."/>
            <person name="Hardison R.C."/>
            <person name="Hou M."/>
            <person name="Kolbe D."/>
            <person name="Makova K."/>
            <person name="Miller W."/>
            <person name="Nekrutenko A."/>
            <person name="Riemer C."/>
            <person name="Schwartz S."/>
            <person name="Taylor J."/>
            <person name="Yang S."/>
            <person name="Zhang Y."/>
            <person name="Lindpaintner K."/>
            <person name="Andrews T.D."/>
            <person name="Caccamo M."/>
            <person name="Clamp M."/>
            <person name="Clarke L."/>
            <person name="Curwen V."/>
            <person name="Durbin R.M."/>
            <person name="Eyras E."/>
            <person name="Searle S.M."/>
            <person name="Cooper G.M."/>
            <person name="Batzoglou S."/>
            <person name="Brudno M."/>
            <person name="Sidow A."/>
            <person name="Stone E.A."/>
            <person name="Payseur B.A."/>
            <person name="Bourque G."/>
            <person name="Lopez-Otin C."/>
            <person name="Puente X.S."/>
            <person name="Chakrabarti K."/>
            <person name="Chatterji S."/>
            <person name="Dewey C."/>
            <person name="Pachter L."/>
            <person name="Bray N."/>
            <person name="Yap V.B."/>
            <person name="Caspi A."/>
            <person name="Tesler G."/>
            <person name="Pevzner P.A."/>
            <person name="Haussler D."/>
            <person name="Roskin K.M."/>
            <person name="Baertsch R."/>
            <person name="Clawson H."/>
            <person name="Furey T.S."/>
            <person name="Hinrichs A.S."/>
            <person name="Karolchik D."/>
            <person name="Kent W.J."/>
            <person name="Rosenbloom K.R."/>
            <person name="Trumbower H."/>
            <person name="Weirauch M."/>
            <person name="Cooper D.N."/>
            <person name="Stenson P.D."/>
            <person name="Ma B."/>
            <person name="Brent M."/>
            <person name="Arumugam M."/>
            <person name="Shteynberg D."/>
            <person name="Copley R.R."/>
            <person name="Taylor M.S."/>
            <person name="Riethman H."/>
            <person name="Mudunuri U."/>
            <person name="Peterson J."/>
            <person name="Guyer M."/>
            <person name="Felsenfeld A."/>
            <person name="Old S."/>
            <person name="Mockrin S."/>
            <person name="Collins F.S."/>
        </authorList>
    </citation>
    <scope>NUCLEOTIDE SEQUENCE [LARGE SCALE GENOMIC DNA]</scope>
    <source>
        <strain>Brown Norway</strain>
    </source>
</reference>
<reference key="2">
    <citation type="journal article" date="1991" name="J. Cell Biol.">
        <title>Specific proto-oncogenic tyrosine kinases of src family are enriched in cell-to-cell adherens junctions where the level of tyrosine phosphorylation is elevated.</title>
        <authorList>
            <person name="Tsukita S."/>
            <person name="Oishi K."/>
            <person name="Akiyama T."/>
            <person name="Yamanashi Y."/>
            <person name="Yamamoto T."/>
            <person name="Tsukita S."/>
        </authorList>
    </citation>
    <scope>SUBCELLULAR LOCATION</scope>
</reference>
<reference key="3">
    <citation type="journal article" date="2003" name="Mol. Cell. Biol.">
        <title>p120 Catenin-associated Fer and Fyn tyrosine kinases regulate beta-catenin Tyr-142 phosphorylation and beta-catenin-alpha-catenin Interaction.</title>
        <authorList>
            <person name="Piedra J."/>
            <person name="Miravet S."/>
            <person name="Castano J."/>
            <person name="Palmer H.G."/>
            <person name="Heisterkamp N."/>
            <person name="Garcia de Herreros A."/>
            <person name="Dunach M."/>
        </authorList>
    </citation>
    <scope>INTERACTION WITH CTNND1</scope>
</reference>
<reference key="4">
    <citation type="journal article" date="2011" name="Int. J. Biochem. Cell Biol.">
        <title>c-Yes regulates cell adhesion at the blood-testis barrier and the apical ectoplasmic specialization in the seminiferous epithelium of rat testes.</title>
        <authorList>
            <person name="Xiao X."/>
            <person name="Mruk D.D."/>
            <person name="Lee W.M."/>
            <person name="Cheng C.Y."/>
        </authorList>
    </citation>
    <scope>FUNCTION</scope>
</reference>
<reference key="5">
    <citation type="journal article" date="2012" name="Nat. Commun.">
        <title>Quantitative maps of protein phosphorylation sites across 14 different rat organs and tissues.</title>
        <authorList>
            <person name="Lundby A."/>
            <person name="Secher A."/>
            <person name="Lage K."/>
            <person name="Nordsborg N.B."/>
            <person name="Dmytriyev A."/>
            <person name="Lundby C."/>
            <person name="Olsen J.V."/>
        </authorList>
    </citation>
    <scope>PHOSPHORYLATION [LARGE SCALE ANALYSIS] AT TYR-535</scope>
    <scope>IDENTIFICATION BY MASS SPECTROMETRY [LARGE SCALE ANALYSIS]</scope>
</reference>
<gene>
    <name type="primary">Yes1</name>
</gene>
<protein>
    <recommendedName>
        <fullName>Tyrosine-protein kinase Yes</fullName>
        <ecNumber>2.7.10.2</ecNumber>
    </recommendedName>
    <alternativeName>
        <fullName>p61-Yes</fullName>
    </alternativeName>
</protein>
<comment type="function">
    <text evidence="1 2 13">Non-receptor protein tyrosine kinase that is involved in the regulation of cell growth and survival, apoptosis, cell-cell adhesion, cytoskeleton remodeling, and differentiation. Stimulation by receptor tyrosine kinases (RTKs) including EGFR, PDGFR, CSF1R and FGFR leads to recruitment of YES1 to the phosphorylated receptor, and activation and phosphorylation of downstream substrates. Upon EGFR activation, promotes the phosphorylation of PARD3 to favor epithelial tight junction assembly. Participates in the phosphorylation of specific junctional components such as CTNND1 by stimulating the FYN and FER tyrosine kinases at cell-cell contacts. Upon T-cell stimulation by CXCL12, phosphorylates collapsin response mediator protein 2/DPYSL2 and induces T-cell migration. Participates in CD95L/FASLG signaling pathway and mediates AKT-mediated cell migration. Plays a role in cell cycle progression by phosphorylating the cyclin dependent kinase 4/CDK4 thus regulating the G1 phase. Also involved in G2/M progression and cytokinesis (By similarity). Catalyzes phosphorylation of organic cation transporter OCT2 which induces its transport activity (By similarity).</text>
</comment>
<comment type="catalytic activity">
    <reaction evidence="9">
        <text>L-tyrosyl-[protein] + ATP = O-phospho-L-tyrosyl-[protein] + ADP + H(+)</text>
        <dbReference type="Rhea" id="RHEA:10596"/>
        <dbReference type="Rhea" id="RHEA-COMP:10136"/>
        <dbReference type="Rhea" id="RHEA-COMP:20101"/>
        <dbReference type="ChEBI" id="CHEBI:15378"/>
        <dbReference type="ChEBI" id="CHEBI:30616"/>
        <dbReference type="ChEBI" id="CHEBI:46858"/>
        <dbReference type="ChEBI" id="CHEBI:61978"/>
        <dbReference type="ChEBI" id="CHEBI:456216"/>
        <dbReference type="EC" id="2.7.10.2"/>
    </reaction>
</comment>
<comment type="subunit">
    <text evidence="1 2 4 11">Interacts with YAP1 and CSF1R (By similarity). Interacts with FASLG (By similarity). Interacts with CTNND1; this interaction allows YES1-mediated activation of FYN and FER and subsequent phosphorylation of CTNND1. Interacts with IL6ST/gp130 (By similarity). Interacts with SCRIB, when YES1 is in a closed conformation; the interaction facilitates YES1 autophosphorylation (By similarity).</text>
</comment>
<comment type="subcellular location">
    <subcellularLocation>
        <location evidence="12">Cell membrane</location>
    </subcellularLocation>
    <subcellularLocation>
        <location evidence="1">Cytoplasm</location>
        <location evidence="1">Cytoskeleton</location>
        <location evidence="1">Microtubule organizing center</location>
        <location evidence="1">Centrosome</location>
    </subcellularLocation>
    <subcellularLocation>
        <location evidence="12">Cytoplasm</location>
        <location evidence="12">Cytosol</location>
    </subcellularLocation>
    <subcellularLocation>
        <location evidence="4">Cell junction</location>
    </subcellularLocation>
    <text evidence="1 4">Newly synthesized protein initially accumulates in the Golgi region and traffics to the plasma membrane through the exocytic pathway. Localized to small puncta throughout the cytoplasm and cell membrane when in the presence of SNAIL1 (By similarity).</text>
</comment>
<comment type="PTM">
    <text evidence="2 4">Phosphorylated (By similarity). Phosphorylation by CSK on the C-terminal tail maintains the enzyme in an inactive state (By similarity). Autophosphorylation at Tyr-424 maintains enzyme activity by blocking CSK-mediated inhibition (By similarity).</text>
</comment>
<comment type="PTM">
    <text evidence="1">Palmitoylation at Cys-3 promotes membrane localization.</text>
</comment>
<proteinExistence type="evidence at protein level"/>
<accession>F1LM93</accession>
<name>YES_RAT</name>